<comment type="function">
    <text evidence="1">Dual methyltransferase that catalyzes methylation of elongation factor 1-alpha (EEF1A1 and EEF1A2) at two different positions, and is therefore involved in the regulation of mRNA translation (By similarity). Via its C-terminus, methylates EEF1A1 and EEF1A2 at the N-terminal residue 'Gly-2' (By similarity). Via its N-terminus dimethylates EEF1A1 and EEF1A2 at residue 'Lys-55' (By similarity). Has no activity towards core histones H2A, H2B, H3 and H4 (By similarity).</text>
</comment>
<comment type="catalytic activity">
    <reaction evidence="1">
        <text>L-lysyl-[protein] + S-adenosyl-L-methionine = N(6)-methyl-L-lysyl-[protein] + S-adenosyl-L-homocysteine + H(+)</text>
        <dbReference type="Rhea" id="RHEA:51736"/>
        <dbReference type="Rhea" id="RHEA-COMP:9752"/>
        <dbReference type="Rhea" id="RHEA-COMP:13053"/>
        <dbReference type="ChEBI" id="CHEBI:15378"/>
        <dbReference type="ChEBI" id="CHEBI:29969"/>
        <dbReference type="ChEBI" id="CHEBI:57856"/>
        <dbReference type="ChEBI" id="CHEBI:59789"/>
        <dbReference type="ChEBI" id="CHEBI:61929"/>
    </reaction>
</comment>
<comment type="catalytic activity">
    <reaction evidence="1">
        <text>N(6)-methyl-L-lysyl-[protein] + S-adenosyl-L-methionine = N(6),N(6)-dimethyl-L-lysyl-[protein] + S-adenosyl-L-homocysteine + H(+)</text>
        <dbReference type="Rhea" id="RHEA:54196"/>
        <dbReference type="Rhea" id="RHEA-COMP:13053"/>
        <dbReference type="Rhea" id="RHEA-COMP:13827"/>
        <dbReference type="ChEBI" id="CHEBI:15378"/>
        <dbReference type="ChEBI" id="CHEBI:57856"/>
        <dbReference type="ChEBI" id="CHEBI:59789"/>
        <dbReference type="ChEBI" id="CHEBI:61929"/>
        <dbReference type="ChEBI" id="CHEBI:61976"/>
    </reaction>
</comment>
<comment type="catalytic activity">
    <reaction evidence="1">
        <text>N-terminal glycyl-L-lysyl-L-glutamyl-[protein] + 3 S-adenosyl-L-methionine = N-terminal N,N,N-trimethyl-glycyl-L-lysyl-L-glutamyl-[protein] + 3 S-adenosyl-L-homocysteine + 3 H(+)</text>
        <dbReference type="Rhea" id="RHEA:58440"/>
        <dbReference type="Rhea" id="RHEA-COMP:15140"/>
        <dbReference type="Rhea" id="RHEA-COMP:15143"/>
        <dbReference type="ChEBI" id="CHEBI:15378"/>
        <dbReference type="ChEBI" id="CHEBI:57856"/>
        <dbReference type="ChEBI" id="CHEBI:59789"/>
        <dbReference type="ChEBI" id="CHEBI:142597"/>
        <dbReference type="ChEBI" id="CHEBI:142600"/>
    </reaction>
</comment>
<comment type="subunit">
    <text evidence="1">Forms a tripartite complex containing GAB1, METTL13 and SPRY2 (By similarity). Within the complex interacts with GAB1 and SPRY2 (By similarity).</text>
</comment>
<comment type="subcellular location">
    <subcellularLocation>
        <location evidence="2">Cytoplasm</location>
    </subcellularLocation>
    <subcellularLocation>
        <location evidence="2">Nucleus</location>
    </subcellularLocation>
    <subcellularLocation>
        <location evidence="2">Mitochondrion</location>
    </subcellularLocation>
</comment>
<comment type="similarity">
    <text evidence="4">Belongs to the methyltransferase superfamily.</text>
</comment>
<reference key="1">
    <citation type="submission" date="2007-06" db="EMBL/GenBank/DDBJ databases">
        <authorList>
            <consortium name="NIH - Mammalian Gene Collection (MGC) project"/>
        </authorList>
    </citation>
    <scope>NUCLEOTIDE SEQUENCE [LARGE SCALE MRNA]</scope>
    <source>
        <strain>Hereford</strain>
        <tissue>Thymus</tissue>
    </source>
</reference>
<dbReference type="EC" id="2.1.1.-" evidence="1"/>
<dbReference type="EMBL" id="BC142321">
    <property type="protein sequence ID" value="AAI42322.1"/>
    <property type="molecule type" value="mRNA"/>
</dbReference>
<dbReference type="RefSeq" id="NP_001092555.1">
    <property type="nucleotide sequence ID" value="NM_001099085.2"/>
</dbReference>
<dbReference type="SMR" id="A5PK19"/>
<dbReference type="FunCoup" id="A5PK19">
    <property type="interactions" value="3819"/>
</dbReference>
<dbReference type="STRING" id="9913.ENSBTAP00000023571"/>
<dbReference type="PaxDb" id="9913-ENSBTAP00000023571"/>
<dbReference type="GeneID" id="538472"/>
<dbReference type="KEGG" id="bta:538472"/>
<dbReference type="CTD" id="51603"/>
<dbReference type="VEuPathDB" id="HostDB:ENSBTAG00000017721"/>
<dbReference type="eggNOG" id="KOG2352">
    <property type="taxonomic scope" value="Eukaryota"/>
</dbReference>
<dbReference type="HOGENOM" id="CLU_010025_1_0_1"/>
<dbReference type="InParanoid" id="A5PK19"/>
<dbReference type="OMA" id="FEWYGAF"/>
<dbReference type="OrthoDB" id="411785at2759"/>
<dbReference type="TreeFam" id="TF105906"/>
<dbReference type="Proteomes" id="UP000009136">
    <property type="component" value="Chromosome 16"/>
</dbReference>
<dbReference type="Bgee" id="ENSBTAG00000017721">
    <property type="expression patterns" value="Expressed in semen and 107 other cell types or tissues"/>
</dbReference>
<dbReference type="GO" id="GO:0005737">
    <property type="term" value="C:cytoplasm"/>
    <property type="evidence" value="ECO:0000250"/>
    <property type="project" value="UniProtKB"/>
</dbReference>
<dbReference type="GO" id="GO:0005739">
    <property type="term" value="C:mitochondrion"/>
    <property type="evidence" value="ECO:0000250"/>
    <property type="project" value="UniProtKB"/>
</dbReference>
<dbReference type="GO" id="GO:0005634">
    <property type="term" value="C:nucleus"/>
    <property type="evidence" value="ECO:0000250"/>
    <property type="project" value="UniProtKB"/>
</dbReference>
<dbReference type="GO" id="GO:0016279">
    <property type="term" value="F:protein-lysine N-methyltransferase activity"/>
    <property type="evidence" value="ECO:0007669"/>
    <property type="project" value="RHEA"/>
</dbReference>
<dbReference type="GO" id="GO:0032259">
    <property type="term" value="P:methylation"/>
    <property type="evidence" value="ECO:0007669"/>
    <property type="project" value="UniProtKB-KW"/>
</dbReference>
<dbReference type="CDD" id="cd02440">
    <property type="entry name" value="AdoMet_MTases"/>
    <property type="match status" value="2"/>
</dbReference>
<dbReference type="FunFam" id="3.40.50.150:FF:000110">
    <property type="entry name" value="methyltransferase-like protein 13 isoform X1"/>
    <property type="match status" value="1"/>
</dbReference>
<dbReference type="FunFam" id="3.40.50.150:FF:000150">
    <property type="entry name" value="methyltransferase-like protein 13 isoform X1"/>
    <property type="match status" value="1"/>
</dbReference>
<dbReference type="Gene3D" id="3.40.50.150">
    <property type="entry name" value="Vaccinia Virus protein VP39"/>
    <property type="match status" value="2"/>
</dbReference>
<dbReference type="InterPro" id="IPR051419">
    <property type="entry name" value="Lys/N-term_MeTrsfase_sf"/>
</dbReference>
<dbReference type="InterPro" id="IPR025714">
    <property type="entry name" value="Methyltranfer_dom"/>
</dbReference>
<dbReference type="InterPro" id="IPR029063">
    <property type="entry name" value="SAM-dependent_MTases_sf"/>
</dbReference>
<dbReference type="NCBIfam" id="NF037959">
    <property type="entry name" value="MFS_SpdSyn"/>
    <property type="match status" value="1"/>
</dbReference>
<dbReference type="PANTHER" id="PTHR12176">
    <property type="entry name" value="SAM-DEPENDENT METHYLTRANSFERASE SUPERFAMILY PROTEIN"/>
    <property type="match status" value="1"/>
</dbReference>
<dbReference type="Pfam" id="PF13847">
    <property type="entry name" value="Methyltransf_31"/>
    <property type="match status" value="1"/>
</dbReference>
<dbReference type="Pfam" id="PF01564">
    <property type="entry name" value="Spermine_synth"/>
    <property type="match status" value="1"/>
</dbReference>
<dbReference type="SUPFAM" id="SSF53335">
    <property type="entry name" value="S-adenosyl-L-methionine-dependent methyltransferases"/>
    <property type="match status" value="2"/>
</dbReference>
<protein>
    <recommendedName>
        <fullName evidence="1">eEF1A lysine and N-terminal methyltransferase</fullName>
        <shortName evidence="1">eEF1A-KNMT</shortName>
    </recommendedName>
    <alternativeName>
        <fullName evidence="1">Methyltransferase-like protein 13</fullName>
    </alternativeName>
    <domain>
        <recommendedName>
            <fullName evidence="1">eEF1A lysine methyltransferase</fullName>
            <ecNumber evidence="1">2.1.1.-</ecNumber>
        </recommendedName>
    </domain>
    <domain>
        <recommendedName>
            <fullName evidence="1">eEF1A N-terminal methyltransferase</fullName>
            <ecNumber evidence="1">2.1.1.-</ecNumber>
        </recommendedName>
    </domain>
</protein>
<name>EFNMT_BOVIN</name>
<feature type="chain" id="PRO_0000310761" description="eEF1A lysine and N-terminal methyltransferase">
    <location>
        <begin position="1"/>
        <end position="699"/>
    </location>
</feature>
<feature type="region of interest" description="Disordered" evidence="3">
    <location>
        <begin position="433"/>
        <end position="460"/>
    </location>
</feature>
<feature type="compositionally biased region" description="Basic residues" evidence="3">
    <location>
        <begin position="436"/>
        <end position="449"/>
    </location>
</feature>
<feature type="modified residue" description="N-acetylmethionine" evidence="1">
    <location>
        <position position="1"/>
    </location>
</feature>
<feature type="modified residue" description="Phosphoserine" evidence="1">
    <location>
        <position position="267"/>
    </location>
</feature>
<gene>
    <name type="primary">METTL13</name>
    <name evidence="1" type="synonym">EEF1AKNMT</name>
    <name evidence="2" type="synonym">FEAT</name>
</gene>
<evidence type="ECO:0000250" key="1">
    <source>
        <dbReference type="UniProtKB" id="Q8N6R0"/>
    </source>
</evidence>
<evidence type="ECO:0000250" key="2">
    <source>
        <dbReference type="UniProtKB" id="Q91YR5"/>
    </source>
</evidence>
<evidence type="ECO:0000256" key="3">
    <source>
        <dbReference type="SAM" id="MobiDB-lite"/>
    </source>
</evidence>
<evidence type="ECO:0000305" key="4"/>
<keyword id="KW-0007">Acetylation</keyword>
<keyword id="KW-0963">Cytoplasm</keyword>
<keyword id="KW-0489">Methyltransferase</keyword>
<keyword id="KW-0496">Mitochondrion</keyword>
<keyword id="KW-0511">Multifunctional enzyme</keyword>
<keyword id="KW-0539">Nucleus</keyword>
<keyword id="KW-0597">Phosphoprotein</keyword>
<keyword id="KW-1185">Reference proteome</keyword>
<keyword id="KW-0808">Transferase</keyword>
<sequence length="699" mass="78751">MNLLPKSSKEFGSVDYWEKFFQQRGKKAFEWYGTYLELCGVLHKYIKPREKVLVVGCGNSELSEQLYDVGYQDIVNIDISEVVIKQMKERNASRRPRMSFLKMDMTQMEFPDASFQVVLDKGTLDAVLTDEEEKTLQQVDRMLAEVGRVLQVGGRYLCISLAQAHVLKKAVGHFSREGWMVRVHQVASSQDQLLEAEPRFSLPVFAFIMTKFRPVTGSALQIFELCAQEQGKPVRLESAEQLAEAVRERQQYAWLCSQLYRKAGLGSVSLDLCNGDTGEPRYTLHVVDSPTVKPSRDNHFAIFIIPQGRETEWLFGMEEGRKQLAASAGFRRLITVALHRGQQYEGMDSIQAELSARVMELAPAGMPAQLQVPFLSVGGDIGVRIVQHQACSPLSGDYVIEDVQGDDKRYFRRLIFLSNRNVVQSEARLLQDVSHRAQKKRKKDRKKHRPADTPEDLPAAQGQSIDKSYLCCEHHKAMIAGLALLKNPELLLETPLALLVVGLGGGSLPLFIHDHFPKSCIHAVEIDPSMLEVATQWFGFSQSDRMKVHIADGLDFITRLAEEEARPHYDVIMFDVDSKDPTLGMSCPPPAFVAQLFLQKVKSILTPEGVFILNLVCRDLGLKDSVLAGLKAVFPLLYVRRIEGEVNEILFCQLHSECKLATPELLEMARALEQTLRKPGKGWDDTYVLSDMLNTVKIV</sequence>
<organism>
    <name type="scientific">Bos taurus</name>
    <name type="common">Bovine</name>
    <dbReference type="NCBI Taxonomy" id="9913"/>
    <lineage>
        <taxon>Eukaryota</taxon>
        <taxon>Metazoa</taxon>
        <taxon>Chordata</taxon>
        <taxon>Craniata</taxon>
        <taxon>Vertebrata</taxon>
        <taxon>Euteleostomi</taxon>
        <taxon>Mammalia</taxon>
        <taxon>Eutheria</taxon>
        <taxon>Laurasiatheria</taxon>
        <taxon>Artiodactyla</taxon>
        <taxon>Ruminantia</taxon>
        <taxon>Pecora</taxon>
        <taxon>Bovidae</taxon>
        <taxon>Bovinae</taxon>
        <taxon>Bos</taxon>
    </lineage>
</organism>
<accession>A5PK19</accession>
<proteinExistence type="evidence at transcript level"/>